<accession>B2TY33</accession>
<gene>
    <name evidence="1" type="primary">epmA</name>
    <name type="synonym">yjeA</name>
    <name type="ordered locus">SbBS512_E4687</name>
</gene>
<organism>
    <name type="scientific">Shigella boydii serotype 18 (strain CDC 3083-94 / BS512)</name>
    <dbReference type="NCBI Taxonomy" id="344609"/>
    <lineage>
        <taxon>Bacteria</taxon>
        <taxon>Pseudomonadati</taxon>
        <taxon>Pseudomonadota</taxon>
        <taxon>Gammaproteobacteria</taxon>
        <taxon>Enterobacterales</taxon>
        <taxon>Enterobacteriaceae</taxon>
        <taxon>Shigella</taxon>
    </lineage>
</organism>
<keyword id="KW-0067">ATP-binding</keyword>
<keyword id="KW-0436">Ligase</keyword>
<keyword id="KW-0547">Nucleotide-binding</keyword>
<keyword id="KW-1185">Reference proteome</keyword>
<reference key="1">
    <citation type="submission" date="2008-05" db="EMBL/GenBank/DDBJ databases">
        <title>Complete sequence of Shigella boydii serotype 18 strain BS512.</title>
        <authorList>
            <person name="Rasko D.A."/>
            <person name="Rosovitz M."/>
            <person name="Maurelli A.T."/>
            <person name="Myers G."/>
            <person name="Seshadri R."/>
            <person name="Cer R."/>
            <person name="Jiang L."/>
            <person name="Ravel J."/>
            <person name="Sebastian Y."/>
        </authorList>
    </citation>
    <scope>NUCLEOTIDE SEQUENCE [LARGE SCALE GENOMIC DNA]</scope>
    <source>
        <strain>CDC 3083-94 / BS512</strain>
    </source>
</reference>
<name>EPMA_SHIB3</name>
<proteinExistence type="inferred from homology"/>
<dbReference type="EC" id="6.3.2.-" evidence="1"/>
<dbReference type="EMBL" id="CP001063">
    <property type="protein sequence ID" value="ACD07792.1"/>
    <property type="molecule type" value="Genomic_DNA"/>
</dbReference>
<dbReference type="RefSeq" id="WP_000004771.1">
    <property type="nucleotide sequence ID" value="NC_010658.1"/>
</dbReference>
<dbReference type="SMR" id="B2TY33"/>
<dbReference type="STRING" id="344609.SbBS512_E4687"/>
<dbReference type="GeneID" id="93777667"/>
<dbReference type="KEGG" id="sbc:SbBS512_E4687"/>
<dbReference type="HOGENOM" id="CLU_008255_1_1_6"/>
<dbReference type="Proteomes" id="UP000001030">
    <property type="component" value="Chromosome"/>
</dbReference>
<dbReference type="GO" id="GO:0005829">
    <property type="term" value="C:cytosol"/>
    <property type="evidence" value="ECO:0007669"/>
    <property type="project" value="TreeGrafter"/>
</dbReference>
<dbReference type="GO" id="GO:0016880">
    <property type="term" value="F:acid-ammonia (or amide) ligase activity"/>
    <property type="evidence" value="ECO:0007669"/>
    <property type="project" value="UniProtKB-UniRule"/>
</dbReference>
<dbReference type="GO" id="GO:0005524">
    <property type="term" value="F:ATP binding"/>
    <property type="evidence" value="ECO:0007669"/>
    <property type="project" value="UniProtKB-UniRule"/>
</dbReference>
<dbReference type="GO" id="GO:0004824">
    <property type="term" value="F:lysine-tRNA ligase activity"/>
    <property type="evidence" value="ECO:0007669"/>
    <property type="project" value="InterPro"/>
</dbReference>
<dbReference type="GO" id="GO:0000049">
    <property type="term" value="F:tRNA binding"/>
    <property type="evidence" value="ECO:0007669"/>
    <property type="project" value="TreeGrafter"/>
</dbReference>
<dbReference type="GO" id="GO:0006430">
    <property type="term" value="P:lysyl-tRNA aminoacylation"/>
    <property type="evidence" value="ECO:0007669"/>
    <property type="project" value="InterPro"/>
</dbReference>
<dbReference type="FunFam" id="3.30.930.10:FF:000017">
    <property type="entry name" value="Elongation factor P--(R)-beta-lysine ligase"/>
    <property type="match status" value="1"/>
</dbReference>
<dbReference type="Gene3D" id="3.30.930.10">
    <property type="entry name" value="Bira Bifunctional Protein, Domain 2"/>
    <property type="match status" value="1"/>
</dbReference>
<dbReference type="HAMAP" id="MF_00174">
    <property type="entry name" value="EF_P_modif_A"/>
    <property type="match status" value="1"/>
</dbReference>
<dbReference type="InterPro" id="IPR004364">
    <property type="entry name" value="Aa-tRNA-synt_II"/>
</dbReference>
<dbReference type="InterPro" id="IPR006195">
    <property type="entry name" value="aa-tRNA-synth_II"/>
</dbReference>
<dbReference type="InterPro" id="IPR045864">
    <property type="entry name" value="aa-tRNA-synth_II/BPL/LPL"/>
</dbReference>
<dbReference type="InterPro" id="IPR004525">
    <property type="entry name" value="EpmA"/>
</dbReference>
<dbReference type="InterPro" id="IPR018149">
    <property type="entry name" value="Lys-tRNA-synth_II_C"/>
</dbReference>
<dbReference type="NCBIfam" id="TIGR00462">
    <property type="entry name" value="genX"/>
    <property type="match status" value="1"/>
</dbReference>
<dbReference type="NCBIfam" id="NF006828">
    <property type="entry name" value="PRK09350.1"/>
    <property type="match status" value="1"/>
</dbReference>
<dbReference type="PANTHER" id="PTHR42918:SF6">
    <property type="entry name" value="ELONGATION FACTOR P--(R)-BETA-LYSINE LIGASE"/>
    <property type="match status" value="1"/>
</dbReference>
<dbReference type="PANTHER" id="PTHR42918">
    <property type="entry name" value="LYSYL-TRNA SYNTHETASE"/>
    <property type="match status" value="1"/>
</dbReference>
<dbReference type="Pfam" id="PF00152">
    <property type="entry name" value="tRNA-synt_2"/>
    <property type="match status" value="1"/>
</dbReference>
<dbReference type="PRINTS" id="PR00982">
    <property type="entry name" value="TRNASYNTHLYS"/>
</dbReference>
<dbReference type="SUPFAM" id="SSF55681">
    <property type="entry name" value="Class II aaRS and biotin synthetases"/>
    <property type="match status" value="1"/>
</dbReference>
<dbReference type="PROSITE" id="PS50862">
    <property type="entry name" value="AA_TRNA_LIGASE_II"/>
    <property type="match status" value="1"/>
</dbReference>
<sequence length="325" mass="36976">MSETASWQPSASIPNLLKRAAIMAEIRRFFADRGVLEVETPCMSQATVTDIHLVPFETRFVGPGHSQGMNLWLMTSPEYHMKRLLVAGCGPVFQLCRSFRNEEMGRYHNPEFTMLEWYRPHYDMYRLMNEVDDLLQQVLDCPAAESLSYQQAFLRYLEIDPLSADKTQLREVAAKLDLSNVADTEEDRDTLLQLLFTFGVEPNIGKEKPTFVYHFPASQASLAQISTEDHRVAERFEVYYKGIELANGFHELTDAREQQQRFEQDNRKRAARGLPQHPIDQNLIEALKVGMPDCSGVALGVDRLVMLALGAETLAEVIAFSVDRA</sequence>
<protein>
    <recommendedName>
        <fullName evidence="1">Elongation factor P--(R)-beta-lysine ligase</fullName>
        <shortName evidence="1">EF-P--(R)-beta-lysine ligase</shortName>
        <ecNumber evidence="1">6.3.2.-</ecNumber>
    </recommendedName>
    <alternativeName>
        <fullName evidence="1">EF-P post-translational modification enzyme A</fullName>
    </alternativeName>
    <alternativeName>
        <fullName evidence="1">EF-P-lysine lysyltransferase</fullName>
    </alternativeName>
</protein>
<evidence type="ECO:0000255" key="1">
    <source>
        <dbReference type="HAMAP-Rule" id="MF_00174"/>
    </source>
</evidence>
<comment type="function">
    <text evidence="1">With EpmB is involved in the beta-lysylation step of the post-translational modification of translation elongation factor P (EF-P) on 'Lys-34'. Catalyzes the ATP-dependent activation of (R)-beta-lysine produced by EpmB, forming a lysyl-adenylate, from which the beta-lysyl moiety is then transferred to the epsilon-amino group of EF-P 'Lys-34'.</text>
</comment>
<comment type="catalytic activity">
    <reaction evidence="1">
        <text>D-beta-lysine + L-lysyl-[protein] + ATP = N(6)-((3R)-3,6-diaminohexanoyl)-L-lysyl-[protein] + AMP + diphosphate + H(+)</text>
        <dbReference type="Rhea" id="RHEA:83435"/>
        <dbReference type="Rhea" id="RHEA-COMP:9752"/>
        <dbReference type="Rhea" id="RHEA-COMP:20131"/>
        <dbReference type="ChEBI" id="CHEBI:15378"/>
        <dbReference type="ChEBI" id="CHEBI:29969"/>
        <dbReference type="ChEBI" id="CHEBI:30616"/>
        <dbReference type="ChEBI" id="CHEBI:33019"/>
        <dbReference type="ChEBI" id="CHEBI:84138"/>
        <dbReference type="ChEBI" id="CHEBI:156053"/>
        <dbReference type="ChEBI" id="CHEBI:456215"/>
    </reaction>
    <physiologicalReaction direction="left-to-right" evidence="1">
        <dbReference type="Rhea" id="RHEA:83436"/>
    </physiologicalReaction>
</comment>
<comment type="subunit">
    <text evidence="1">Homodimer.</text>
</comment>
<comment type="similarity">
    <text evidence="1">Belongs to the class-II aminoacyl-tRNA synthetase family. EpmA subfamily.</text>
</comment>
<feature type="chain" id="PRO_1000097912" description="Elongation factor P--(R)-beta-lysine ligase">
    <location>
        <begin position="1"/>
        <end position="325"/>
    </location>
</feature>
<feature type="binding site" evidence="1">
    <location>
        <begin position="76"/>
        <end position="78"/>
    </location>
    <ligand>
        <name>substrate</name>
    </ligand>
</feature>
<feature type="binding site" evidence="1">
    <location>
        <begin position="100"/>
        <end position="102"/>
    </location>
    <ligand>
        <name>ATP</name>
        <dbReference type="ChEBI" id="CHEBI:30616"/>
    </ligand>
</feature>
<feature type="binding site" evidence="1">
    <location>
        <position position="109"/>
    </location>
    <ligand>
        <name>ATP</name>
        <dbReference type="ChEBI" id="CHEBI:30616"/>
    </ligand>
</feature>
<feature type="binding site" evidence="1">
    <location>
        <position position="118"/>
    </location>
    <ligand>
        <name>substrate</name>
    </ligand>
</feature>
<feature type="binding site" evidence="1">
    <location>
        <begin position="244"/>
        <end position="245"/>
    </location>
    <ligand>
        <name>ATP</name>
        <dbReference type="ChEBI" id="CHEBI:30616"/>
    </ligand>
</feature>
<feature type="binding site" evidence="1">
    <location>
        <position position="251"/>
    </location>
    <ligand>
        <name>substrate</name>
    </ligand>
</feature>
<feature type="binding site" evidence="1">
    <location>
        <position position="300"/>
    </location>
    <ligand>
        <name>ATP</name>
        <dbReference type="ChEBI" id="CHEBI:30616"/>
    </ligand>
</feature>